<gene>
    <name evidence="1" type="primary">ribK</name>
    <name type="ordered locus">Smar_1200</name>
</gene>
<sequence length="130" mass="14675">MPIKLKGKIVSGLGVGAKYVQLYRGVFNKYLGIDPYPGTLNIDIGQDFFIYTKKLKAKIIPPPRKGLGCVLAYPGILMGIKIYVIKPCITNHGRNILEIISDKNLRKTLNLKDNDIVEIIIYDEEDYSYI</sequence>
<comment type="function">
    <text evidence="1">Catalyzes the CTP-dependent phosphorylation of riboflavin (vitamin B2) to form flavin mononucleotide (FMN).</text>
</comment>
<comment type="catalytic activity">
    <reaction evidence="1">
        <text>riboflavin + CTP = CDP + FMN + H(+)</text>
        <dbReference type="Rhea" id="RHEA:25021"/>
        <dbReference type="ChEBI" id="CHEBI:15378"/>
        <dbReference type="ChEBI" id="CHEBI:37563"/>
        <dbReference type="ChEBI" id="CHEBI:57986"/>
        <dbReference type="ChEBI" id="CHEBI:58069"/>
        <dbReference type="ChEBI" id="CHEBI:58210"/>
        <dbReference type="EC" id="2.7.1.161"/>
    </reaction>
</comment>
<comment type="cofactor">
    <cofactor evidence="1">
        <name>Mg(2+)</name>
        <dbReference type="ChEBI" id="CHEBI:18420"/>
    </cofactor>
    <text evidence="1">Binds 1 Mg(2+) ion per subunit.</text>
</comment>
<comment type="pathway">
    <text evidence="1">Cofactor biosynthesis; FMN biosynthesis; FMN from riboflavin (CTP route): step 1/1.</text>
</comment>
<comment type="similarity">
    <text evidence="1">Belongs to the archaeal riboflavin kinase family.</text>
</comment>
<organism>
    <name type="scientific">Staphylothermus marinus (strain ATCC 43588 / DSM 3639 / JCM 9404 / F1)</name>
    <dbReference type="NCBI Taxonomy" id="399550"/>
    <lineage>
        <taxon>Archaea</taxon>
        <taxon>Thermoproteota</taxon>
        <taxon>Thermoprotei</taxon>
        <taxon>Desulfurococcales</taxon>
        <taxon>Desulfurococcaceae</taxon>
        <taxon>Staphylothermus</taxon>
    </lineage>
</organism>
<protein>
    <recommendedName>
        <fullName evidence="1">Riboflavin kinase</fullName>
        <shortName evidence="1">RFK</shortName>
        <ecNumber evidence="1">2.7.1.161</ecNumber>
    </recommendedName>
    <alternativeName>
        <fullName evidence="1">CTP-dependent riboflavin kinase</fullName>
    </alternativeName>
    <alternativeName>
        <fullName evidence="1">CTP:riboflavin 5'-phosphotransferase</fullName>
    </alternativeName>
    <alternativeName>
        <fullName evidence="1">Flavokinase</fullName>
    </alternativeName>
</protein>
<feature type="chain" id="PRO_0000322077" description="Riboflavin kinase">
    <location>
        <begin position="1"/>
        <end position="130"/>
    </location>
</feature>
<feature type="binding site" evidence="1">
    <location>
        <begin position="12"/>
        <end position="17"/>
    </location>
    <ligand>
        <name>CDP</name>
        <dbReference type="ChEBI" id="CHEBI:58069"/>
    </ligand>
</feature>
<feature type="binding site" evidence="1">
    <location>
        <position position="39"/>
    </location>
    <ligand>
        <name>Mg(2+)</name>
        <dbReference type="ChEBI" id="CHEBI:18420"/>
    </ligand>
</feature>
<feature type="binding site" evidence="1">
    <location>
        <position position="41"/>
    </location>
    <ligand>
        <name>Mg(2+)</name>
        <dbReference type="ChEBI" id="CHEBI:18420"/>
    </ligand>
</feature>
<feature type="binding site" evidence="1">
    <location>
        <position position="90"/>
    </location>
    <ligand>
        <name>FMN</name>
        <dbReference type="ChEBI" id="CHEBI:58210"/>
    </ligand>
</feature>
<feature type="binding site" evidence="1">
    <location>
        <position position="98"/>
    </location>
    <ligand>
        <name>FMN</name>
        <dbReference type="ChEBI" id="CHEBI:58210"/>
    </ligand>
</feature>
<feature type="binding site" evidence="1">
    <location>
        <begin position="103"/>
        <end position="106"/>
    </location>
    <ligand>
        <name>CDP</name>
        <dbReference type="ChEBI" id="CHEBI:58069"/>
    </ligand>
</feature>
<evidence type="ECO:0000255" key="1">
    <source>
        <dbReference type="HAMAP-Rule" id="MF_01285"/>
    </source>
</evidence>
<reference key="1">
    <citation type="journal article" date="2009" name="BMC Genomics">
        <title>The complete genome sequence of Staphylothermus marinus reveals differences in sulfur metabolism among heterotrophic Crenarchaeota.</title>
        <authorList>
            <person name="Anderson I.J."/>
            <person name="Dharmarajan L."/>
            <person name="Rodriguez J."/>
            <person name="Hooper S."/>
            <person name="Porat I."/>
            <person name="Ulrich L.E."/>
            <person name="Elkins J.G."/>
            <person name="Mavromatis K."/>
            <person name="Sun H."/>
            <person name="Land M."/>
            <person name="Lapidus A."/>
            <person name="Lucas S."/>
            <person name="Barry K."/>
            <person name="Huber H."/>
            <person name="Zhulin I.B."/>
            <person name="Whitman W.B."/>
            <person name="Mukhopadhyay B."/>
            <person name="Woese C."/>
            <person name="Bristow J."/>
            <person name="Kyrpides N."/>
        </authorList>
    </citation>
    <scope>NUCLEOTIDE SEQUENCE [LARGE SCALE GENOMIC DNA]</scope>
    <source>
        <strain>ATCC 43588 / DSM 3639 / JCM 9404 / F1</strain>
    </source>
</reference>
<reference key="2">
    <citation type="journal article" date="2009" name="Stand. Genomic Sci.">
        <title>Complete genome sequence of Staphylothermus marinus Stetter and Fiala 1986 type strain F1.</title>
        <authorList>
            <person name="Anderson I.J."/>
            <person name="Sun H."/>
            <person name="Lapidus A."/>
            <person name="Copeland A."/>
            <person name="Glavina Del Rio T."/>
            <person name="Tice H."/>
            <person name="Dalin E."/>
            <person name="Lucas S."/>
            <person name="Barry K."/>
            <person name="Land M."/>
            <person name="Richardson P."/>
            <person name="Huber H."/>
            <person name="Kyrpides N.C."/>
        </authorList>
    </citation>
    <scope>NUCLEOTIDE SEQUENCE [LARGE SCALE GENOMIC DNA]</scope>
    <source>
        <strain>ATCC 43588 / DSM 3639 / JCM 9404 / F1</strain>
    </source>
</reference>
<keyword id="KW-0285">Flavoprotein</keyword>
<keyword id="KW-0288">FMN</keyword>
<keyword id="KW-0418">Kinase</keyword>
<keyword id="KW-0460">Magnesium</keyword>
<keyword id="KW-0479">Metal-binding</keyword>
<keyword id="KW-0547">Nucleotide-binding</keyword>
<keyword id="KW-1185">Reference proteome</keyword>
<keyword id="KW-0808">Transferase</keyword>
<name>RIFK_STAMF</name>
<dbReference type="EC" id="2.7.1.161" evidence="1"/>
<dbReference type="EMBL" id="CP000575">
    <property type="protein sequence ID" value="ABN70295.1"/>
    <property type="molecule type" value="Genomic_DNA"/>
</dbReference>
<dbReference type="RefSeq" id="WP_011839486.1">
    <property type="nucleotide sequence ID" value="NC_009033.1"/>
</dbReference>
<dbReference type="SMR" id="A3DNT5"/>
<dbReference type="STRING" id="399550.Smar_1200"/>
<dbReference type="GeneID" id="4907167"/>
<dbReference type="KEGG" id="smr:Smar_1200"/>
<dbReference type="eggNOG" id="arCOG01904">
    <property type="taxonomic scope" value="Archaea"/>
</dbReference>
<dbReference type="HOGENOM" id="CLU_140165_0_0_2"/>
<dbReference type="OrthoDB" id="30955at2157"/>
<dbReference type="UniPathway" id="UPA00276">
    <property type="reaction ID" value="UER00929"/>
</dbReference>
<dbReference type="Proteomes" id="UP000000254">
    <property type="component" value="Chromosome"/>
</dbReference>
<dbReference type="GO" id="GO:0000287">
    <property type="term" value="F:magnesium ion binding"/>
    <property type="evidence" value="ECO:0007669"/>
    <property type="project" value="UniProtKB-UniRule"/>
</dbReference>
<dbReference type="GO" id="GO:0000166">
    <property type="term" value="F:nucleotide binding"/>
    <property type="evidence" value="ECO:0007669"/>
    <property type="project" value="UniProtKB-UniRule"/>
</dbReference>
<dbReference type="GO" id="GO:0008531">
    <property type="term" value="F:riboflavin kinase activity"/>
    <property type="evidence" value="ECO:0007669"/>
    <property type="project" value="InterPro"/>
</dbReference>
<dbReference type="GO" id="GO:0009398">
    <property type="term" value="P:FMN biosynthetic process"/>
    <property type="evidence" value="ECO:0007669"/>
    <property type="project" value="UniProtKB-UniRule"/>
</dbReference>
<dbReference type="GO" id="GO:0009231">
    <property type="term" value="P:riboflavin biosynthetic process"/>
    <property type="evidence" value="ECO:0007669"/>
    <property type="project" value="InterPro"/>
</dbReference>
<dbReference type="Gene3D" id="2.40.30.30">
    <property type="entry name" value="Riboflavin kinase-like"/>
    <property type="match status" value="1"/>
</dbReference>
<dbReference type="HAMAP" id="MF_01285">
    <property type="entry name" value="Riboflavin_kinase"/>
    <property type="match status" value="1"/>
</dbReference>
<dbReference type="InterPro" id="IPR039063">
    <property type="entry name" value="RibK_CTP-dep"/>
</dbReference>
<dbReference type="InterPro" id="IPR023470">
    <property type="entry name" value="Riboflavin_kinase_archaeal"/>
</dbReference>
<dbReference type="InterPro" id="IPR023602">
    <property type="entry name" value="Riboflavin_kinase_CTP-dep"/>
</dbReference>
<dbReference type="InterPro" id="IPR023465">
    <property type="entry name" value="Riboflavin_kinase_dom_sf"/>
</dbReference>
<dbReference type="PANTHER" id="PTHR40706">
    <property type="entry name" value="RIBOFLAVIN KINASE"/>
    <property type="match status" value="1"/>
</dbReference>
<dbReference type="PANTHER" id="PTHR40706:SF1">
    <property type="entry name" value="RIBOFLAVIN KINASE"/>
    <property type="match status" value="1"/>
</dbReference>
<dbReference type="Pfam" id="PF01982">
    <property type="entry name" value="CTP-dep_RFKase"/>
    <property type="match status" value="1"/>
</dbReference>
<dbReference type="SUPFAM" id="SSF82114">
    <property type="entry name" value="Riboflavin kinase-like"/>
    <property type="match status" value="1"/>
</dbReference>
<proteinExistence type="inferred from homology"/>
<accession>A3DNT5</accession>